<feature type="chain" id="PRO_0000080260" description="Alpha-1,3/1,6-mannosyltransferase ALG2">
    <location>
        <begin position="1"/>
        <end position="416"/>
    </location>
</feature>
<feature type="topological domain" description="Cytoplasmic" evidence="4">
    <location>
        <begin position="1"/>
        <end position="84"/>
    </location>
</feature>
<feature type="intramembrane region" description="Helical" evidence="1">
    <location>
        <begin position="85"/>
        <end position="105"/>
    </location>
</feature>
<feature type="topological domain" description="Cytoplasmic" evidence="4">
    <location>
        <begin position="106"/>
        <end position="416"/>
    </location>
</feature>
<feature type="splice variant" id="VSP_013188" description="In isoform 2." evidence="5 6">
    <location>
        <begin position="1"/>
        <end position="91"/>
    </location>
</feature>
<feature type="splice variant" id="VSP_013189" description="In isoform 2." evidence="5 6">
    <original>VRMVFLALYVLFLADEEFDVVVCDQ</original>
    <variation>MPLLKLVHGSPLVFGEKFKLFTL</variation>
    <location>
        <begin position="92"/>
        <end position="116"/>
    </location>
</feature>
<feature type="sequence variant" id="VAR_049351" description="In dbSNP:rs11545137.">
    <original>S</original>
    <variation>P</variation>
    <location>
        <position position="11"/>
    </location>
</feature>
<feature type="sequence variant" id="VAR_073332" description="In CMS14; decreased protein abundance; dbSNP:rs730882051." evidence="3">
    <original>V</original>
    <variation>G</variation>
    <location>
        <position position="68"/>
    </location>
</feature>
<feature type="sequence variant" id="VAR_049352" description="In dbSNP:rs35626507.">
    <original>V</original>
    <variation>A</variation>
    <location>
        <position position="367"/>
    </location>
</feature>
<feature type="sequence conflict" description="In Ref. 2; BAC11449." evidence="7" ref="2">
    <original>Q</original>
    <variation>R</variation>
    <location>
        <position position="178"/>
    </location>
</feature>
<name>ALG2_HUMAN</name>
<organism>
    <name type="scientific">Homo sapiens</name>
    <name type="common">Human</name>
    <dbReference type="NCBI Taxonomy" id="9606"/>
    <lineage>
        <taxon>Eukaryota</taxon>
        <taxon>Metazoa</taxon>
        <taxon>Chordata</taxon>
        <taxon>Craniata</taxon>
        <taxon>Vertebrata</taxon>
        <taxon>Euteleostomi</taxon>
        <taxon>Mammalia</taxon>
        <taxon>Eutheria</taxon>
        <taxon>Euarchontoglires</taxon>
        <taxon>Primates</taxon>
        <taxon>Haplorrhini</taxon>
        <taxon>Catarrhini</taxon>
        <taxon>Hominidae</taxon>
        <taxon>Homo</taxon>
    </lineage>
</organism>
<sequence>MAEEQGRERDSVPKPSVLFLHPDLGVGGAERLVLDAALALQARGCSVKIWTAHYDPGHCFAESRELPVRCAGDWLPRGLGWGGRGAAVCAYVRMVFLALYVLFLADEEFDVVVCDQVSACIPVFRLARRRKKILFYCHFPDLLLTKRDSFLKRLYRAPIDWIEEYTTGMADCILVNSQFTAAVFKETFKSLSHIDPDVLYPSLNVTSFDSVVPEKLDDLVPKGKKFLLLSINRYERKKNLTLALEALVQLRGRLTSQDWERVHLIVAGGYDERVLENVEHYQELKKMVQQSDLGQYVTFLRSFSDKQKISLLHSCTCVLYTPSNEHFGIVPLEAMYMQCPVIAVNSGGPLESIDHSVTGFLCEPDPVHFSEAIEKFIREPSLKATMGLAGRARVKEKFSPEAFTEQLYRYVTKLLV</sequence>
<evidence type="ECO:0000255" key="1"/>
<evidence type="ECO:0000269" key="2">
    <source>
    </source>
</evidence>
<evidence type="ECO:0000269" key="3">
    <source>
    </source>
</evidence>
<evidence type="ECO:0000269" key="4">
    <source>
    </source>
</evidence>
<evidence type="ECO:0000303" key="5">
    <source>
    </source>
</evidence>
<evidence type="ECO:0000303" key="6">
    <source>
    </source>
</evidence>
<evidence type="ECO:0000305" key="7"/>
<evidence type="ECO:0000305" key="8">
    <source>
    </source>
</evidence>
<evidence type="ECO:0000305" key="9">
    <source>
    </source>
</evidence>
<accession>Q9H553</accession>
<accession>A2A2Y0</accession>
<accession>Q8NBX2</accession>
<accession>Q8NC39</accession>
<gene>
    <name type="primary">ALG2</name>
    <name type="ORF">UNQ666/PRO1298</name>
</gene>
<keyword id="KW-0025">Alternative splicing</keyword>
<keyword id="KW-0900">Congenital disorder of glycosylation</keyword>
<keyword id="KW-1004">Congenital myasthenic syndrome</keyword>
<keyword id="KW-0225">Disease variant</keyword>
<keyword id="KW-0256">Endoplasmic reticulum</keyword>
<keyword id="KW-0328">Glycosyltransferase</keyword>
<keyword id="KW-0472">Membrane</keyword>
<keyword id="KW-1267">Proteomics identification</keyword>
<keyword id="KW-1185">Reference proteome</keyword>
<keyword id="KW-0808">Transferase</keyword>
<keyword id="KW-0812">Transmembrane</keyword>
<keyword id="KW-1133">Transmembrane helix</keyword>
<proteinExistence type="evidence at protein level"/>
<dbReference type="EC" id="2.4.1.132" evidence="2 4"/>
<dbReference type="EC" id="2.4.1.257" evidence="2 4"/>
<dbReference type="EMBL" id="AB161356">
    <property type="protein sequence ID" value="BAD11905.1"/>
    <property type="molecule type" value="mRNA"/>
</dbReference>
<dbReference type="EMBL" id="AY358697">
    <property type="protein sequence ID" value="AAQ89060.1"/>
    <property type="molecule type" value="mRNA"/>
</dbReference>
<dbReference type="EMBL" id="AK027417">
    <property type="protein sequence ID" value="BAB55099.1"/>
    <property type="molecule type" value="mRNA"/>
</dbReference>
<dbReference type="EMBL" id="AK074704">
    <property type="protein sequence ID" value="BAC11150.1"/>
    <property type="molecule type" value="mRNA"/>
</dbReference>
<dbReference type="EMBL" id="AK074988">
    <property type="protein sequence ID" value="BAC11337.1"/>
    <property type="molecule type" value="mRNA"/>
</dbReference>
<dbReference type="EMBL" id="AK075172">
    <property type="protein sequence ID" value="BAC11449.1"/>
    <property type="molecule type" value="mRNA"/>
</dbReference>
<dbReference type="EMBL" id="AL137067">
    <property type="status" value="NOT_ANNOTATED_CDS"/>
    <property type="molecule type" value="Genomic_DNA"/>
</dbReference>
<dbReference type="EMBL" id="BC017876">
    <property type="protein sequence ID" value="AAH17876.1"/>
    <property type="molecule type" value="mRNA"/>
</dbReference>
<dbReference type="CCDS" id="CCDS6739.1">
    <molecule id="Q9H553-1"/>
</dbReference>
<dbReference type="RefSeq" id="NP_149078.1">
    <molecule id="Q9H553-1"/>
    <property type="nucleotide sequence ID" value="NM_033087.4"/>
</dbReference>
<dbReference type="RefSeq" id="XP_047279952.1">
    <molecule id="Q9H553-2"/>
    <property type="nucleotide sequence ID" value="XM_047423996.1"/>
</dbReference>
<dbReference type="RefSeq" id="XP_054220043.1">
    <molecule id="Q9H553-2"/>
    <property type="nucleotide sequence ID" value="XM_054364068.1"/>
</dbReference>
<dbReference type="SMR" id="Q9H553"/>
<dbReference type="BioGRID" id="124493">
    <property type="interactions" value="47"/>
</dbReference>
<dbReference type="FunCoup" id="Q9H553">
    <property type="interactions" value="3579"/>
</dbReference>
<dbReference type="IntAct" id="Q9H553">
    <property type="interactions" value="16"/>
</dbReference>
<dbReference type="STRING" id="9606.ENSP00000417764"/>
<dbReference type="CAZy" id="GT4">
    <property type="family name" value="Glycosyltransferase Family 4"/>
</dbReference>
<dbReference type="iPTMnet" id="Q9H553"/>
<dbReference type="PhosphoSitePlus" id="Q9H553"/>
<dbReference type="SwissPalm" id="Q9H553"/>
<dbReference type="BioMuta" id="ALG2"/>
<dbReference type="DMDM" id="46395991"/>
<dbReference type="jPOST" id="Q9H553"/>
<dbReference type="MassIVE" id="Q9H553"/>
<dbReference type="PaxDb" id="9606-ENSP00000417764"/>
<dbReference type="PeptideAtlas" id="Q9H553"/>
<dbReference type="ProteomicsDB" id="80891">
    <molecule id="Q9H553-1"/>
</dbReference>
<dbReference type="ProteomicsDB" id="80892">
    <molecule id="Q9H553-2"/>
</dbReference>
<dbReference type="Pumba" id="Q9H553"/>
<dbReference type="Antibodypedia" id="29048">
    <property type="antibodies" value="265 antibodies from 24 providers"/>
</dbReference>
<dbReference type="DNASU" id="85365"/>
<dbReference type="Ensembl" id="ENST00000319033.7">
    <molecule id="Q9H553-2"/>
    <property type="protein sequence ID" value="ENSP00000326609.6"/>
    <property type="gene ID" value="ENSG00000119523.10"/>
</dbReference>
<dbReference type="Ensembl" id="ENST00000476832.2">
    <molecule id="Q9H553-1"/>
    <property type="protein sequence ID" value="ENSP00000417764.1"/>
    <property type="gene ID" value="ENSG00000119523.10"/>
</dbReference>
<dbReference type="GeneID" id="85365"/>
<dbReference type="KEGG" id="hsa:85365"/>
<dbReference type="MANE-Select" id="ENST00000476832.2">
    <property type="protein sequence ID" value="ENSP00000417764.1"/>
    <property type="RefSeq nucleotide sequence ID" value="NM_033087.4"/>
    <property type="RefSeq protein sequence ID" value="NP_149078.1"/>
</dbReference>
<dbReference type="UCSC" id="uc004azf.4">
    <molecule id="Q9H553-1"/>
    <property type="organism name" value="human"/>
</dbReference>
<dbReference type="AGR" id="HGNC:23159"/>
<dbReference type="CTD" id="85365"/>
<dbReference type="DisGeNET" id="85365"/>
<dbReference type="GeneCards" id="ALG2"/>
<dbReference type="GeneReviews" id="ALG2"/>
<dbReference type="HGNC" id="HGNC:23159">
    <property type="gene designation" value="ALG2"/>
</dbReference>
<dbReference type="HPA" id="ENSG00000119523">
    <property type="expression patterns" value="Low tissue specificity"/>
</dbReference>
<dbReference type="MalaCards" id="ALG2"/>
<dbReference type="MIM" id="607905">
    <property type="type" value="gene"/>
</dbReference>
<dbReference type="MIM" id="607906">
    <property type="type" value="phenotype"/>
</dbReference>
<dbReference type="MIM" id="616228">
    <property type="type" value="phenotype"/>
</dbReference>
<dbReference type="neXtProt" id="NX_Q9H553"/>
<dbReference type="OpenTargets" id="ENSG00000119523"/>
<dbReference type="Orphanet" id="79326">
    <property type="disease" value="ALG2-CDG"/>
</dbReference>
<dbReference type="Orphanet" id="353327">
    <property type="disease" value="Congenital myasthenic syndromes with glycosylation defect"/>
</dbReference>
<dbReference type="PharmGKB" id="PA134956849"/>
<dbReference type="VEuPathDB" id="HostDB:ENSG00000119523"/>
<dbReference type="eggNOG" id="KOG0853">
    <property type="taxonomic scope" value="Eukaryota"/>
</dbReference>
<dbReference type="GeneTree" id="ENSGT00550000075033"/>
<dbReference type="HOGENOM" id="CLU_030619_1_0_1"/>
<dbReference type="InParanoid" id="Q9H553"/>
<dbReference type="OMA" id="AMYMKCP"/>
<dbReference type="OrthoDB" id="448893at2759"/>
<dbReference type="PAN-GO" id="Q9H553">
    <property type="GO annotations" value="3 GO annotations based on evolutionary models"/>
</dbReference>
<dbReference type="PhylomeDB" id="Q9H553"/>
<dbReference type="TreeFam" id="TF106000"/>
<dbReference type="BRENDA" id="2.4.1.132">
    <property type="organism ID" value="2681"/>
</dbReference>
<dbReference type="BRENDA" id="2.4.1.257">
    <property type="organism ID" value="2681"/>
</dbReference>
<dbReference type="PathwayCommons" id="Q9H553"/>
<dbReference type="Reactome" id="R-HSA-446193">
    <property type="pathway name" value="Biosynthesis of the N-glycan precursor (dolichol lipid-linked oligosaccharide, LLO) and transfer to a nascent protein"/>
</dbReference>
<dbReference type="Reactome" id="R-HSA-4549349">
    <property type="pathway name" value="Defective ALG2 causes CDG-1i"/>
</dbReference>
<dbReference type="SignaLink" id="Q9H553"/>
<dbReference type="SIGNOR" id="Q9H553"/>
<dbReference type="UniPathway" id="UPA00378"/>
<dbReference type="BioGRID-ORCS" id="85365">
    <property type="hits" value="801 hits in 1181 CRISPR screens"/>
</dbReference>
<dbReference type="ChiTaRS" id="ALG2">
    <property type="organism name" value="human"/>
</dbReference>
<dbReference type="GeneWiki" id="ALG2"/>
<dbReference type="GenomeRNAi" id="85365"/>
<dbReference type="Pharos" id="Q9H553">
    <property type="development level" value="Tbio"/>
</dbReference>
<dbReference type="PRO" id="PR:Q9H553"/>
<dbReference type="Proteomes" id="UP000005640">
    <property type="component" value="Chromosome 9"/>
</dbReference>
<dbReference type="RNAct" id="Q9H553">
    <property type="molecule type" value="protein"/>
</dbReference>
<dbReference type="Bgee" id="ENSG00000119523">
    <property type="expression patterns" value="Expressed in epithelial cell of pancreas and 186 other cell types or tissues"/>
</dbReference>
<dbReference type="ExpressionAtlas" id="Q9H553">
    <property type="expression patterns" value="baseline and differential"/>
</dbReference>
<dbReference type="GO" id="GO:0098554">
    <property type="term" value="C:cytoplasmic side of endoplasmic reticulum membrane"/>
    <property type="evidence" value="ECO:0000314"/>
    <property type="project" value="UniProtKB"/>
</dbReference>
<dbReference type="GO" id="GO:0012505">
    <property type="term" value="C:endomembrane system"/>
    <property type="evidence" value="ECO:0000318"/>
    <property type="project" value="GO_Central"/>
</dbReference>
<dbReference type="GO" id="GO:0005789">
    <property type="term" value="C:endoplasmic reticulum membrane"/>
    <property type="evidence" value="ECO:0000304"/>
    <property type="project" value="Reactome"/>
</dbReference>
<dbReference type="GO" id="GO:0016020">
    <property type="term" value="C:membrane"/>
    <property type="evidence" value="ECO:0007005"/>
    <property type="project" value="UniProtKB"/>
</dbReference>
<dbReference type="GO" id="GO:0000033">
    <property type="term" value="F:alpha-1,3-mannosyltransferase activity"/>
    <property type="evidence" value="ECO:0000314"/>
    <property type="project" value="UniProt"/>
</dbReference>
<dbReference type="GO" id="GO:0004378">
    <property type="term" value="F:GDP-Man:Man1GlcNAc2-PP-Dol alpha-1,3-mannosyltransferase activity"/>
    <property type="evidence" value="ECO:0000314"/>
    <property type="project" value="UniProtKB"/>
</dbReference>
<dbReference type="GO" id="GO:0102704">
    <property type="term" value="F:GDP-Man:Man2GlcNAc2-PP-dolichol alpha-1,6-mannosyltransferase activity"/>
    <property type="evidence" value="ECO:0000314"/>
    <property type="project" value="UniProtKB"/>
</dbReference>
<dbReference type="GO" id="GO:0006488">
    <property type="term" value="P:dolichol-linked oligosaccharide biosynthetic process"/>
    <property type="evidence" value="ECO:0000314"/>
    <property type="project" value="UniProtKB"/>
</dbReference>
<dbReference type="GO" id="GO:0006486">
    <property type="term" value="P:protein glycosylation"/>
    <property type="evidence" value="ECO:0000316"/>
    <property type="project" value="UniProtKB"/>
</dbReference>
<dbReference type="GO" id="GO:0006487">
    <property type="term" value="P:protein N-linked glycosylation"/>
    <property type="evidence" value="ECO:0000314"/>
    <property type="project" value="UniProtKB"/>
</dbReference>
<dbReference type="CDD" id="cd03805">
    <property type="entry name" value="GT4_ALG2-like"/>
    <property type="match status" value="1"/>
</dbReference>
<dbReference type="FunFam" id="3.40.50.2000:FF:000085">
    <property type="entry name" value="alpha-1,3/1,6-mannosyltransferase ALG2"/>
    <property type="match status" value="1"/>
</dbReference>
<dbReference type="FunFam" id="3.40.50.2000:FF:000097">
    <property type="entry name" value="alpha-1,3/1,6-mannosyltransferase ALG2"/>
    <property type="match status" value="1"/>
</dbReference>
<dbReference type="Gene3D" id="3.40.50.2000">
    <property type="entry name" value="Glycogen Phosphorylase B"/>
    <property type="match status" value="2"/>
</dbReference>
<dbReference type="InterPro" id="IPR027054">
    <property type="entry name" value="ALG2"/>
</dbReference>
<dbReference type="InterPro" id="IPR001296">
    <property type="entry name" value="Glyco_trans_1"/>
</dbReference>
<dbReference type="InterPro" id="IPR028098">
    <property type="entry name" value="Glyco_trans_4-like_N"/>
</dbReference>
<dbReference type="PANTHER" id="PTHR45918">
    <property type="entry name" value="ALPHA-1,3/1,6-MANNOSYLTRANSFERASE ALG2"/>
    <property type="match status" value="1"/>
</dbReference>
<dbReference type="PANTHER" id="PTHR45918:SF1">
    <property type="entry name" value="ALPHA-1,3_1,6-MANNOSYLTRANSFERASE ALG2"/>
    <property type="match status" value="1"/>
</dbReference>
<dbReference type="Pfam" id="PF13439">
    <property type="entry name" value="Glyco_transf_4"/>
    <property type="match status" value="1"/>
</dbReference>
<dbReference type="Pfam" id="PF00534">
    <property type="entry name" value="Glycos_transf_1"/>
    <property type="match status" value="1"/>
</dbReference>
<dbReference type="SUPFAM" id="SSF53756">
    <property type="entry name" value="UDP-Glycosyltransferase/glycogen phosphorylase"/>
    <property type="match status" value="1"/>
</dbReference>
<comment type="function">
    <text evidence="2 4">Mannosyltransferase that operates in the biosynthetic pathway of dolichol-linked oligosaccharides, the glycan precursors employed in protein asparagine (N)-glycosylation. The assembly of dolichol-linked oligosaccharides begins on the cytosolic side of the endoplasmic reticulum membrane and finishes in its lumen. The sequential addition of sugars to dolichol pyrophosphate produces dolichol-linked oligosaccharides containing fourteen sugars, including two GlcNAcs, nine mannoses and three glucoses. Once assembled, the oligosaccharide is transferred from the lipid to nascent proteins by oligosaccharyltransferases. Catalyzes, on the cytoplasmic face of the endoplasmic reticulum, the addition of the second and third mannose residues to the dolichol-linked oligosaccharide chain, to produce Man3GlcNAc(2)-PP-dolichol core oligosaccharide. Man3GlcNAc(2)-PP-dolichol is a substrate for ALG11, the following enzyme in the biosynthetic pathway (PubMed:12684507, PubMed:35136180). While both alpha 1,3 and alpha 1,6 linkages are possible, the sequential addition of alpha 1,3 followed by alpha 1,6 is probably the preferred route (PubMed:35136180).</text>
</comment>
<comment type="catalytic activity">
    <reaction evidence="2 4">
        <text>a beta-D-Man-(1-&gt;4)-beta-D-GlcNAc-(1-&gt;4)-alpha-D-GlcNAc-diphospho-di-trans,poly-cis-dolichol + GDP-alpha-D-mannose = an alpha-D-Man-(1-&gt;3)-beta-D-Man-(1-&gt;4)-beta-D-GlcNAc-(1-&gt;4)-alpha-D-GlcNAc-diphospho-di-trans,poly-cis-dolichol + GDP + H(+)</text>
        <dbReference type="Rhea" id="RHEA:29515"/>
        <dbReference type="Rhea" id="RHEA-COMP:19511"/>
        <dbReference type="Rhea" id="RHEA-COMP:19513"/>
        <dbReference type="ChEBI" id="CHEBI:15378"/>
        <dbReference type="ChEBI" id="CHEBI:57527"/>
        <dbReference type="ChEBI" id="CHEBI:58189"/>
        <dbReference type="ChEBI" id="CHEBI:58472"/>
        <dbReference type="ChEBI" id="CHEBI:132510"/>
        <dbReference type="EC" id="2.4.1.132"/>
    </reaction>
    <physiologicalReaction direction="left-to-right" evidence="8">
        <dbReference type="Rhea" id="RHEA:29516"/>
    </physiologicalReaction>
</comment>
<comment type="catalytic activity">
    <reaction evidence="2 4">
        <text>an alpha-D-Man-(1-&gt;3)-beta-D-Man-(1-&gt;4)-beta-D-GlcNAc-(1-&gt;4)-alpha-D-GlcNAc-diphospho-di-trans,poly-cis-dolichol + GDP-alpha-D-mannose = an alpha-D-Man-(1-&gt;3)-[alpha-D-Man-(1-&gt;6)]-beta-D-Man-(1-&gt;4)-beta-D-GlcNAc-(1-&gt;4)-alpha-D-GlcNAc-diphospho-di-trans,poly-cis-dolichol + GDP + H(+)</text>
        <dbReference type="Rhea" id="RHEA:29519"/>
        <dbReference type="Rhea" id="RHEA-COMP:19513"/>
        <dbReference type="Rhea" id="RHEA-COMP:19515"/>
        <dbReference type="ChEBI" id="CHEBI:15378"/>
        <dbReference type="ChEBI" id="CHEBI:57527"/>
        <dbReference type="ChEBI" id="CHEBI:58189"/>
        <dbReference type="ChEBI" id="CHEBI:132510"/>
        <dbReference type="ChEBI" id="CHEBI:132511"/>
        <dbReference type="EC" id="2.4.1.257"/>
    </reaction>
    <physiologicalReaction direction="left-to-right" evidence="2">
        <dbReference type="Rhea" id="RHEA:29520"/>
    </physiologicalReaction>
</comment>
<comment type="catalytic activity">
    <reaction evidence="4">
        <text>a beta-D-Man-(1-&gt;4)-beta-D-GlcNAc-(1-&gt;4)-alpha-D-GlcNAc-diphospho-di-trans,poly-cis-dolichol + GDP-alpha-D-mannose = an alpha-D-Man-(1-&gt;6)-beta-D-Man-(1-&gt;4)-beta-D-GlcNAc-(1-&gt;4)-alpha-D-GlcNAc-diphospho-di-trans,poly-cis-dolichol + GDP + H(+)</text>
        <dbReference type="Rhea" id="RHEA:79023"/>
        <dbReference type="Rhea" id="RHEA-COMP:19511"/>
        <dbReference type="Rhea" id="RHEA-COMP:19514"/>
        <dbReference type="ChEBI" id="CHEBI:15378"/>
        <dbReference type="ChEBI" id="CHEBI:57527"/>
        <dbReference type="ChEBI" id="CHEBI:58189"/>
        <dbReference type="ChEBI" id="CHEBI:58472"/>
        <dbReference type="ChEBI" id="CHEBI:229641"/>
    </reaction>
    <physiologicalReaction direction="left-to-right" evidence="9">
        <dbReference type="Rhea" id="RHEA:79024"/>
    </physiologicalReaction>
</comment>
<comment type="catalytic activity">
    <reaction evidence="4">
        <text>an alpha-D-Man-(1-&gt;6)-beta-D-Man-(1-&gt;4)-beta-D-GlcNAc-(1-&gt;4)-alpha-D-GlcNAc-diphospho-di-trans,poly-cis-dolichol + GDP-alpha-D-mannose = an alpha-D-Man-(1-&gt;3)-[alpha-D-Man-(1-&gt;6)]-beta-D-Man-(1-&gt;4)-beta-D-GlcNAc-(1-&gt;4)-alpha-D-GlcNAc-diphospho-di-trans,poly-cis-dolichol + GDP + H(+)</text>
        <dbReference type="Rhea" id="RHEA:79027"/>
        <dbReference type="Rhea" id="RHEA-COMP:19514"/>
        <dbReference type="Rhea" id="RHEA-COMP:19515"/>
        <dbReference type="ChEBI" id="CHEBI:15378"/>
        <dbReference type="ChEBI" id="CHEBI:57527"/>
        <dbReference type="ChEBI" id="CHEBI:58189"/>
        <dbReference type="ChEBI" id="CHEBI:132511"/>
        <dbReference type="ChEBI" id="CHEBI:229641"/>
    </reaction>
    <physiologicalReaction direction="left-to-right" evidence="9">
        <dbReference type="Rhea" id="RHEA:79028"/>
    </physiologicalReaction>
</comment>
<comment type="biophysicochemical properties">
    <kinetics>
        <KM evidence="4">15.1 uM for alpha-D-Man-(1-&gt;3)-beta-D-Man-(1-&gt;4)-beta-D-GlcNAc-(1-&gt;4)-alpha-D-GlcNAc-diphosphodolichol</KM>
        <KM evidence="4">136.7 uM for alpha-D-Man-(1-&gt;6)-beta-D-Man-(1-&gt;4)-beta-D-GlcNAc-(1-&gt;4)-alpha-D-GlcNAc-diphosphodolichol</KM>
        <text evidence="4">kcat is 5.4 min(-1) with alpha-D-Man-(1-&gt;3)-beta-D-Man-(1-&gt;4)-beta-D-GlcNAc-(1-&gt;4)-alpha-D-GlcNAc-diphosphodolichol as substrate. kcat is 63.2 min(-1) with alpha-D-Man-(1-&gt;6)-beta-D-Man-(1-&gt;4)-beta-D-GlcNAc-(1-&gt;4)-alpha-D-GlcNAc-diphosphodolichol as substrate.</text>
    </kinetics>
</comment>
<comment type="pathway">
    <text evidence="2">Protein modification; protein glycosylation.</text>
</comment>
<comment type="interaction">
    <interactant intactId="EBI-25806804">
        <id>Q9H553</id>
    </interactant>
    <interactant intactId="EBI-930964">
        <id>P54253</id>
        <label>ATXN1</label>
    </interactant>
    <organismsDiffer>false</organismsDiffer>
    <experiments>3</experiments>
</comment>
<comment type="interaction">
    <interactant intactId="EBI-25806804">
        <id>Q9H553</id>
    </interactant>
    <interactant intactId="EBI-466029">
        <id>P42858</id>
        <label>HTT</label>
    </interactant>
    <organismsDiffer>false</organismsDiffer>
    <experiments>3</experiments>
</comment>
<comment type="subcellular location">
    <subcellularLocation>
        <location evidence="4">Endoplasmic reticulum membrane</location>
        <topology evidence="4">Single-pass membrane protein</topology>
    </subcellularLocation>
    <text evidence="4">Active on cytoplasmic side of endoplasmic reticulum membrane.</text>
</comment>
<comment type="alternative products">
    <event type="alternative splicing"/>
    <isoform>
        <id>Q9H553-1</id>
        <name>1</name>
        <sequence type="displayed"/>
    </isoform>
    <isoform>
        <id>Q9H553-2</id>
        <name>2</name>
        <sequence type="described" ref="VSP_013188 VSP_013189"/>
    </isoform>
</comment>
<comment type="disease" evidence="2">
    <disease id="DI-00341">
        <name>Congenital disorder of glycosylation 1I</name>
        <acronym>CDG1I</acronym>
        <description>A form of congenital disorder of glycosylation, a multisystem disorder caused by a defect in glycoprotein biosynthesis and characterized by under-glycosylated serum glycoproteins. Congenital disorders of glycosylation result in a wide variety of clinical features, such as defects in the nervous system development, psychomotor retardation, dysmorphic features, hypotonia, coagulation disorders, and immunodeficiency. The broad spectrum of features reflects the critical role of N-glycoproteins during embryonic development, differentiation, and maintenance of cell functions.</description>
        <dbReference type="MIM" id="607906"/>
    </disease>
    <text>The disease is caused by variants affecting the gene represented in this entry.</text>
</comment>
<comment type="disease" evidence="3">
    <disease id="DI-04340">
        <name>Myasthenic syndrome, congenital, 14</name>
        <acronym>CMS14</acronym>
        <description>A form of congenital myasthenic syndrome, a group of disorders characterized by failure of neuromuscular transmission, including pre-synaptic, synaptic, and post-synaptic disorders that are not of autoimmune origin. Clinical features are easy fatigability and muscle weakness. CMS14 is an autosomal recessive form characterized by onset of limb-girdle muscle weakness in early childhood. The disorder is slowly progressive, and some patients may become wheelchair-bound.</description>
        <dbReference type="MIM" id="616228"/>
    </disease>
    <text>The disease is caused by variants affecting the gene represented in this entry.</text>
</comment>
<comment type="similarity">
    <text evidence="7">Belongs to the glycosyltransferase group 1 family. Glycosyltransferase 4 subfamily.</text>
</comment>
<reference key="1">
    <citation type="submission" date="2004-01" db="EMBL/GenBank/DDBJ databases">
        <title>Molecular cloning of the mammalian genes which complement the defect of the yeast alg2 mutation.</title>
        <authorList>
            <person name="Takahashi T."/>
            <person name="Katoh R."/>
            <person name="Okutomi S."/>
            <person name="Suzuki Y."/>
            <person name="Mori H."/>
            <person name="Takizawa Y."/>
            <person name="Nishikawa Y."/>
        </authorList>
    </citation>
    <scope>NUCLEOTIDE SEQUENCE [MRNA] (ISOFORM 1)</scope>
</reference>
<reference key="2">
    <citation type="journal article" date="2003" name="Genome Res.">
        <title>The secreted protein discovery initiative (SPDI), a large-scale effort to identify novel human secreted and transmembrane proteins: a bioinformatics assessment.</title>
        <authorList>
            <person name="Clark H.F."/>
            <person name="Gurney A.L."/>
            <person name="Abaya E."/>
            <person name="Baker K."/>
            <person name="Baldwin D.T."/>
            <person name="Brush J."/>
            <person name="Chen J."/>
            <person name="Chow B."/>
            <person name="Chui C."/>
            <person name="Crowley C."/>
            <person name="Currell B."/>
            <person name="Deuel B."/>
            <person name="Dowd P."/>
            <person name="Eaton D."/>
            <person name="Foster J.S."/>
            <person name="Grimaldi C."/>
            <person name="Gu Q."/>
            <person name="Hass P.E."/>
            <person name="Heldens S."/>
            <person name="Huang A."/>
            <person name="Kim H.S."/>
            <person name="Klimowski L."/>
            <person name="Jin Y."/>
            <person name="Johnson S."/>
            <person name="Lee J."/>
            <person name="Lewis L."/>
            <person name="Liao D."/>
            <person name="Mark M.R."/>
            <person name="Robbie E."/>
            <person name="Sanchez C."/>
            <person name="Schoenfeld J."/>
            <person name="Seshagiri S."/>
            <person name="Simmons L."/>
            <person name="Singh J."/>
            <person name="Smith V."/>
            <person name="Stinson J."/>
            <person name="Vagts A."/>
            <person name="Vandlen R.L."/>
            <person name="Watanabe C."/>
            <person name="Wieand D."/>
            <person name="Woods K."/>
            <person name="Xie M.-H."/>
            <person name="Yansura D.G."/>
            <person name="Yi S."/>
            <person name="Yu G."/>
            <person name="Yuan J."/>
            <person name="Zhang M."/>
            <person name="Zhang Z."/>
            <person name="Goddard A.D."/>
            <person name="Wood W.I."/>
            <person name="Godowski P.J."/>
            <person name="Gray A.M."/>
        </authorList>
    </citation>
    <scope>NUCLEOTIDE SEQUENCE [LARGE SCALE MRNA] (ISOFORM 2)</scope>
</reference>
<reference key="3">
    <citation type="journal article" date="2004" name="Nat. Genet.">
        <title>Complete sequencing and characterization of 21,243 full-length human cDNAs.</title>
        <authorList>
            <person name="Ota T."/>
            <person name="Suzuki Y."/>
            <person name="Nishikawa T."/>
            <person name="Otsuki T."/>
            <person name="Sugiyama T."/>
            <person name="Irie R."/>
            <person name="Wakamatsu A."/>
            <person name="Hayashi K."/>
            <person name="Sato H."/>
            <person name="Nagai K."/>
            <person name="Kimura K."/>
            <person name="Makita H."/>
            <person name="Sekine M."/>
            <person name="Obayashi M."/>
            <person name="Nishi T."/>
            <person name="Shibahara T."/>
            <person name="Tanaka T."/>
            <person name="Ishii S."/>
            <person name="Yamamoto J."/>
            <person name="Saito K."/>
            <person name="Kawai Y."/>
            <person name="Isono Y."/>
            <person name="Nakamura Y."/>
            <person name="Nagahari K."/>
            <person name="Murakami K."/>
            <person name="Yasuda T."/>
            <person name="Iwayanagi T."/>
            <person name="Wagatsuma M."/>
            <person name="Shiratori A."/>
            <person name="Sudo H."/>
            <person name="Hosoiri T."/>
            <person name="Kaku Y."/>
            <person name="Kodaira H."/>
            <person name="Kondo H."/>
            <person name="Sugawara M."/>
            <person name="Takahashi M."/>
            <person name="Kanda K."/>
            <person name="Yokoi T."/>
            <person name="Furuya T."/>
            <person name="Kikkawa E."/>
            <person name="Omura Y."/>
            <person name="Abe K."/>
            <person name="Kamihara K."/>
            <person name="Katsuta N."/>
            <person name="Sato K."/>
            <person name="Tanikawa M."/>
            <person name="Yamazaki M."/>
            <person name="Ninomiya K."/>
            <person name="Ishibashi T."/>
            <person name="Yamashita H."/>
            <person name="Murakawa K."/>
            <person name="Fujimori K."/>
            <person name="Tanai H."/>
            <person name="Kimata M."/>
            <person name="Watanabe M."/>
            <person name="Hiraoka S."/>
            <person name="Chiba Y."/>
            <person name="Ishida S."/>
            <person name="Ono Y."/>
            <person name="Takiguchi S."/>
            <person name="Watanabe S."/>
            <person name="Yosida M."/>
            <person name="Hotuta T."/>
            <person name="Kusano J."/>
            <person name="Kanehori K."/>
            <person name="Takahashi-Fujii A."/>
            <person name="Hara H."/>
            <person name="Tanase T.-O."/>
            <person name="Nomura Y."/>
            <person name="Togiya S."/>
            <person name="Komai F."/>
            <person name="Hara R."/>
            <person name="Takeuchi K."/>
            <person name="Arita M."/>
            <person name="Imose N."/>
            <person name="Musashino K."/>
            <person name="Yuuki H."/>
            <person name="Oshima A."/>
            <person name="Sasaki N."/>
            <person name="Aotsuka S."/>
            <person name="Yoshikawa Y."/>
            <person name="Matsunawa H."/>
            <person name="Ichihara T."/>
            <person name="Shiohata N."/>
            <person name="Sano S."/>
            <person name="Moriya S."/>
            <person name="Momiyama H."/>
            <person name="Satoh N."/>
            <person name="Takami S."/>
            <person name="Terashima Y."/>
            <person name="Suzuki O."/>
            <person name="Nakagawa S."/>
            <person name="Senoh A."/>
            <person name="Mizoguchi H."/>
            <person name="Goto Y."/>
            <person name="Shimizu F."/>
            <person name="Wakebe H."/>
            <person name="Hishigaki H."/>
            <person name="Watanabe T."/>
            <person name="Sugiyama A."/>
            <person name="Takemoto M."/>
            <person name="Kawakami B."/>
            <person name="Yamazaki M."/>
            <person name="Watanabe K."/>
            <person name="Kumagai A."/>
            <person name="Itakura S."/>
            <person name="Fukuzumi Y."/>
            <person name="Fujimori Y."/>
            <person name="Komiyama M."/>
            <person name="Tashiro H."/>
            <person name="Tanigami A."/>
            <person name="Fujiwara T."/>
            <person name="Ono T."/>
            <person name="Yamada K."/>
            <person name="Fujii Y."/>
            <person name="Ozaki K."/>
            <person name="Hirao M."/>
            <person name="Ohmori Y."/>
            <person name="Kawabata A."/>
            <person name="Hikiji T."/>
            <person name="Kobatake N."/>
            <person name="Inagaki H."/>
            <person name="Ikema Y."/>
            <person name="Okamoto S."/>
            <person name="Okitani R."/>
            <person name="Kawakami T."/>
            <person name="Noguchi S."/>
            <person name="Itoh T."/>
            <person name="Shigeta K."/>
            <person name="Senba T."/>
            <person name="Matsumura K."/>
            <person name="Nakajima Y."/>
            <person name="Mizuno T."/>
            <person name="Morinaga M."/>
            <person name="Sasaki M."/>
            <person name="Togashi T."/>
            <person name="Oyama M."/>
            <person name="Hata H."/>
            <person name="Watanabe M."/>
            <person name="Komatsu T."/>
            <person name="Mizushima-Sugano J."/>
            <person name="Satoh T."/>
            <person name="Shirai Y."/>
            <person name="Takahashi Y."/>
            <person name="Nakagawa K."/>
            <person name="Okumura K."/>
            <person name="Nagase T."/>
            <person name="Nomura N."/>
            <person name="Kikuchi H."/>
            <person name="Masuho Y."/>
            <person name="Yamashita R."/>
            <person name="Nakai K."/>
            <person name="Yada T."/>
            <person name="Nakamura Y."/>
            <person name="Ohara O."/>
            <person name="Isogai T."/>
            <person name="Sugano S."/>
        </authorList>
    </citation>
    <scope>NUCLEOTIDE SEQUENCE [LARGE SCALE MRNA] (ISOFORMS 1 AND 2)</scope>
    <source>
        <tissue>Placenta</tissue>
    </source>
</reference>
<reference key="4">
    <citation type="journal article" date="2004" name="Nature">
        <title>DNA sequence and analysis of human chromosome 9.</title>
        <authorList>
            <person name="Humphray S.J."/>
            <person name="Oliver K."/>
            <person name="Hunt A.R."/>
            <person name="Plumb R.W."/>
            <person name="Loveland J.E."/>
            <person name="Howe K.L."/>
            <person name="Andrews T.D."/>
            <person name="Searle S."/>
            <person name="Hunt S.E."/>
            <person name="Scott C.E."/>
            <person name="Jones M.C."/>
            <person name="Ainscough R."/>
            <person name="Almeida J.P."/>
            <person name="Ambrose K.D."/>
            <person name="Ashwell R.I.S."/>
            <person name="Babbage A.K."/>
            <person name="Babbage S."/>
            <person name="Bagguley C.L."/>
            <person name="Bailey J."/>
            <person name="Banerjee R."/>
            <person name="Barker D.J."/>
            <person name="Barlow K.F."/>
            <person name="Bates K."/>
            <person name="Beasley H."/>
            <person name="Beasley O."/>
            <person name="Bird C.P."/>
            <person name="Bray-Allen S."/>
            <person name="Brown A.J."/>
            <person name="Brown J.Y."/>
            <person name="Burford D."/>
            <person name="Burrill W."/>
            <person name="Burton J."/>
            <person name="Carder C."/>
            <person name="Carter N.P."/>
            <person name="Chapman J.C."/>
            <person name="Chen Y."/>
            <person name="Clarke G."/>
            <person name="Clark S.Y."/>
            <person name="Clee C.M."/>
            <person name="Clegg S."/>
            <person name="Collier R.E."/>
            <person name="Corby N."/>
            <person name="Crosier M."/>
            <person name="Cummings A.T."/>
            <person name="Davies J."/>
            <person name="Dhami P."/>
            <person name="Dunn M."/>
            <person name="Dutta I."/>
            <person name="Dyer L.W."/>
            <person name="Earthrowl M.E."/>
            <person name="Faulkner L."/>
            <person name="Fleming C.J."/>
            <person name="Frankish A."/>
            <person name="Frankland J.A."/>
            <person name="French L."/>
            <person name="Fricker D.G."/>
            <person name="Garner P."/>
            <person name="Garnett J."/>
            <person name="Ghori J."/>
            <person name="Gilbert J.G.R."/>
            <person name="Glison C."/>
            <person name="Grafham D.V."/>
            <person name="Gribble S."/>
            <person name="Griffiths C."/>
            <person name="Griffiths-Jones S."/>
            <person name="Grocock R."/>
            <person name="Guy J."/>
            <person name="Hall R.E."/>
            <person name="Hammond S."/>
            <person name="Harley J.L."/>
            <person name="Harrison E.S.I."/>
            <person name="Hart E.A."/>
            <person name="Heath P.D."/>
            <person name="Henderson C.D."/>
            <person name="Hopkins B.L."/>
            <person name="Howard P.J."/>
            <person name="Howden P.J."/>
            <person name="Huckle E."/>
            <person name="Johnson C."/>
            <person name="Johnson D."/>
            <person name="Joy A.A."/>
            <person name="Kay M."/>
            <person name="Keenan S."/>
            <person name="Kershaw J.K."/>
            <person name="Kimberley A.M."/>
            <person name="King A."/>
            <person name="Knights A."/>
            <person name="Laird G.K."/>
            <person name="Langford C."/>
            <person name="Lawlor S."/>
            <person name="Leongamornlert D.A."/>
            <person name="Leversha M."/>
            <person name="Lloyd C."/>
            <person name="Lloyd D.M."/>
            <person name="Lovell J."/>
            <person name="Martin S."/>
            <person name="Mashreghi-Mohammadi M."/>
            <person name="Matthews L."/>
            <person name="McLaren S."/>
            <person name="McLay K.E."/>
            <person name="McMurray A."/>
            <person name="Milne S."/>
            <person name="Nickerson T."/>
            <person name="Nisbett J."/>
            <person name="Nordsiek G."/>
            <person name="Pearce A.V."/>
            <person name="Peck A.I."/>
            <person name="Porter K.M."/>
            <person name="Pandian R."/>
            <person name="Pelan S."/>
            <person name="Phillimore B."/>
            <person name="Povey S."/>
            <person name="Ramsey Y."/>
            <person name="Rand V."/>
            <person name="Scharfe M."/>
            <person name="Sehra H.K."/>
            <person name="Shownkeen R."/>
            <person name="Sims S.K."/>
            <person name="Skuce C.D."/>
            <person name="Smith M."/>
            <person name="Steward C.A."/>
            <person name="Swarbreck D."/>
            <person name="Sycamore N."/>
            <person name="Tester J."/>
            <person name="Thorpe A."/>
            <person name="Tracey A."/>
            <person name="Tromans A."/>
            <person name="Thomas D.W."/>
            <person name="Wall M."/>
            <person name="Wallis J.M."/>
            <person name="West A.P."/>
            <person name="Whitehead S.L."/>
            <person name="Willey D.L."/>
            <person name="Williams S.A."/>
            <person name="Wilming L."/>
            <person name="Wray P.W."/>
            <person name="Young L."/>
            <person name="Ashurst J.L."/>
            <person name="Coulson A."/>
            <person name="Blocker H."/>
            <person name="Durbin R.M."/>
            <person name="Sulston J.E."/>
            <person name="Hubbard T."/>
            <person name="Jackson M.J."/>
            <person name="Bentley D.R."/>
            <person name="Beck S."/>
            <person name="Rogers J."/>
            <person name="Dunham I."/>
        </authorList>
    </citation>
    <scope>NUCLEOTIDE SEQUENCE [LARGE SCALE GENOMIC DNA]</scope>
</reference>
<reference key="5">
    <citation type="journal article" date="2004" name="Genome Res.">
        <title>The status, quality, and expansion of the NIH full-length cDNA project: the Mammalian Gene Collection (MGC).</title>
        <authorList>
            <consortium name="The MGC Project Team"/>
        </authorList>
    </citation>
    <scope>NUCLEOTIDE SEQUENCE [LARGE SCALE MRNA] (ISOFORM 1)</scope>
    <source>
        <tissue>Embryonic testis carcinoma</tissue>
    </source>
</reference>
<reference key="6">
    <citation type="journal article" date="2003" name="J. Biol. Chem.">
        <title>A new type of congenital disorders of glycosylation (CDG-Ii) provides new insights into the early steps of dolichol-linked oligosaccharide biosynthesis.</title>
        <authorList>
            <person name="Thiel C."/>
            <person name="Schwarz M."/>
            <person name="Peng J."/>
            <person name="Grzmil M."/>
            <person name="Hasilik M."/>
            <person name="Braulke T."/>
            <person name="Kohlschuetter A."/>
            <person name="von Figura K."/>
            <person name="Lehle L."/>
            <person name="Koerner C."/>
        </authorList>
    </citation>
    <scope>FUNCTION</scope>
    <scope>CATALYTIC ACTIVITY</scope>
    <scope>PATHWAY</scope>
    <scope>INVOLVEMENT IN CDG1I</scope>
</reference>
<reference key="7">
    <citation type="journal article" date="2011" name="BMC Syst. Biol.">
        <title>Initial characterization of the human central proteome.</title>
        <authorList>
            <person name="Burkard T.R."/>
            <person name="Planyavsky M."/>
            <person name="Kaupe I."/>
            <person name="Breitwieser F.P."/>
            <person name="Buerckstuemmer T."/>
            <person name="Bennett K.L."/>
            <person name="Superti-Furga G."/>
            <person name="Colinge J."/>
        </authorList>
    </citation>
    <scope>IDENTIFICATION BY MASS SPECTROMETRY [LARGE SCALE ANALYSIS]</scope>
</reference>
<reference key="8">
    <citation type="journal article" date="2013" name="Brain">
        <title>Congenital myasthenic syndromes due to mutations in ALG2 and ALG14.</title>
        <authorList>
            <consortium name="WGS500 Consortium"/>
            <person name="Cossins J."/>
            <person name="Belaya K."/>
            <person name="Hicks D."/>
            <person name="Salih M.A."/>
            <person name="Finlayson S."/>
            <person name="Carboni N."/>
            <person name="Liu W.W."/>
            <person name="Maxwell S."/>
            <person name="Zoltowska K."/>
            <person name="Farsani G.T."/>
            <person name="Laval S."/>
            <person name="Seidhamed M.Z."/>
            <person name="Donnelly P."/>
            <person name="Bentley D."/>
            <person name="McGowan S.J."/>
            <person name="Muller J."/>
            <person name="Palace J."/>
            <person name="Lochmuller H."/>
            <person name="Beeson D."/>
            <person name="Donnelly P."/>
            <person name="Bell J."/>
            <person name="Bentley D."/>
            <person name="McVean G."/>
            <person name="Ratcfliffe P."/>
            <person name="Taylor J."/>
            <person name="Wilkie A."/>
            <person name="Donnelly P."/>
            <person name="Broxholme J."/>
            <person name="Buck D."/>
            <person name="Cazier J.B."/>
            <person name="Cornall R."/>
            <person name="Gregory L."/>
            <person name="Knight J."/>
            <person name="Lunter G."/>
            <person name="McVean G."/>
            <person name="Taylor J."/>
            <person name="Tomlinson I."/>
            <person name="Wilkie A."/>
            <person name="Buck D."/>
            <person name="Allan C."/>
            <person name="Attar M."/>
            <person name="Green A."/>
            <person name="Gregory L."/>
            <person name="Humphray S."/>
            <person name="Kingsbury Z."/>
            <person name="Lamble S."/>
            <person name="Lonie L."/>
            <person name="Pagnamenta A."/>
            <person name="Piazza P."/>
            <person name="Polanco G."/>
            <person name="Trebes A."/>
            <person name="McVean G."/>
            <person name="Donnelly P."/>
            <person name="Cazier J.B."/>
            <person name="Broxholme J."/>
            <person name="Copley R."/>
            <person name="Fiddy S."/>
            <person name="Grocock R."/>
            <person name="Hatton E."/>
            <person name="Holmes C."/>
            <person name="Hughes L."/>
            <person name="Humburg P."/>
            <person name="Kanapin A."/>
            <person name="Lise S."/>
            <person name="Lunter G."/>
            <person name="Martin H."/>
            <person name="Murray L."/>
            <person name="McCarthy D."/>
            <person name="Rimmer A."/>
            <person name="Sahgal N."/>
            <person name="Wright B."/>
            <person name="Yau C."/>
        </authorList>
    </citation>
    <scope>INVOLVEMENT IN CMS14</scope>
    <scope>VARIANT CMS14 GLY-68</scope>
    <scope>CHARACTERIZATION OF VARIANT CMS14 GLY-68</scope>
</reference>
<reference key="9">
    <citation type="journal article" date="2022" name="Commun. Biol.">
        <title>Topological and enzymatic analysis of human Alg2 mannosyltransferase reveals its role in lipid-linked oligosaccharide biosynthetic pathway.</title>
        <authorList>
            <person name="Xiang M.H."/>
            <person name="Xu X.X."/>
            <person name="Wang C.D."/>
            <person name="Chen S."/>
            <person name="Xu S."/>
            <person name="Xu X.Y."/>
            <person name="Dean N."/>
            <person name="Wang N."/>
            <person name="Gao X.D."/>
        </authorList>
    </citation>
    <scope>FUNCTION</scope>
    <scope>CATALYTIC ACTIVITY</scope>
    <scope>BIOPHYSICOCHEMICAL PROPERTIES</scope>
    <scope>SUBCELLULAR LOCATION</scope>
    <scope>TOPOLOGY</scope>
</reference>
<protein>
    <recommendedName>
        <fullName>Alpha-1,3/1,6-mannosyltransferase ALG2</fullName>
        <ecNumber evidence="2 4">2.4.1.132</ecNumber>
        <ecNumber evidence="2 4">2.4.1.257</ecNumber>
    </recommendedName>
    <alternativeName>
        <fullName>Asparagine-linked glycosylation protein 2 homolog</fullName>
    </alternativeName>
    <alternativeName>
        <fullName>GDP-Man:Man(1)GlcNAc(2)-PP-Dol alpha-1,3-mannosyltransferase</fullName>
    </alternativeName>
    <alternativeName>
        <fullName>GDP-Man:Man(1)GlcNAc(2)-PP-dolichol mannosyltransferase</fullName>
    </alternativeName>
    <alternativeName>
        <fullName>GDP-Man:Man(2)GlcNAc(2)-PP-Dol alpha-1,6-mannosyltransferase</fullName>
    </alternativeName>
</protein>